<accession>B5E399</accession>
<reference key="1">
    <citation type="journal article" date="2001" name="Microb. Drug Resist.">
        <title>Annotated draft genomic sequence from a Streptococcus pneumoniae type 19F clinical isolate.</title>
        <authorList>
            <person name="Dopazo J."/>
            <person name="Mendoza A."/>
            <person name="Herrero J."/>
            <person name="Caldara F."/>
            <person name="Humbert Y."/>
            <person name="Friedli L."/>
            <person name="Guerrier M."/>
            <person name="Grand-Schenk E."/>
            <person name="Gandin C."/>
            <person name="de Francesco M."/>
            <person name="Polissi A."/>
            <person name="Buell G."/>
            <person name="Feger G."/>
            <person name="Garcia E."/>
            <person name="Peitsch M."/>
            <person name="Garcia-Bustos J.F."/>
        </authorList>
    </citation>
    <scope>NUCLEOTIDE SEQUENCE [LARGE SCALE GENOMIC DNA]</scope>
    <source>
        <strain>G54</strain>
    </source>
</reference>
<reference key="2">
    <citation type="submission" date="2008-03" db="EMBL/GenBank/DDBJ databases">
        <title>Pneumococcal beta glucoside metabolism investigated by whole genome comparison.</title>
        <authorList>
            <person name="Mulas L."/>
            <person name="Trappetti C."/>
            <person name="Hakenbeck R."/>
            <person name="Iannelli F."/>
            <person name="Pozzi G."/>
            <person name="Davidsen T.M."/>
            <person name="Tettelin H."/>
            <person name="Oggioni M."/>
        </authorList>
    </citation>
    <scope>NUCLEOTIDE SEQUENCE [LARGE SCALE GENOMIC DNA]</scope>
    <source>
        <strain>G54</strain>
    </source>
</reference>
<comment type="function">
    <text evidence="1">Catalyzes the reduction of the glycolytic intermediate dihydroxyacetone phosphate (DHAP) to sn-glycerol 3-phosphate (G3P), the key precursor for phospholipid synthesis.</text>
</comment>
<comment type="catalytic activity">
    <reaction evidence="1">
        <text>sn-glycerol 3-phosphate + NAD(+) = dihydroxyacetone phosphate + NADH + H(+)</text>
        <dbReference type="Rhea" id="RHEA:11092"/>
        <dbReference type="ChEBI" id="CHEBI:15378"/>
        <dbReference type="ChEBI" id="CHEBI:57540"/>
        <dbReference type="ChEBI" id="CHEBI:57597"/>
        <dbReference type="ChEBI" id="CHEBI:57642"/>
        <dbReference type="ChEBI" id="CHEBI:57945"/>
        <dbReference type="EC" id="1.1.1.94"/>
    </reaction>
    <physiologicalReaction direction="right-to-left" evidence="1">
        <dbReference type="Rhea" id="RHEA:11094"/>
    </physiologicalReaction>
</comment>
<comment type="catalytic activity">
    <reaction evidence="1">
        <text>sn-glycerol 3-phosphate + NADP(+) = dihydroxyacetone phosphate + NADPH + H(+)</text>
        <dbReference type="Rhea" id="RHEA:11096"/>
        <dbReference type="ChEBI" id="CHEBI:15378"/>
        <dbReference type="ChEBI" id="CHEBI:57597"/>
        <dbReference type="ChEBI" id="CHEBI:57642"/>
        <dbReference type="ChEBI" id="CHEBI:57783"/>
        <dbReference type="ChEBI" id="CHEBI:58349"/>
        <dbReference type="EC" id="1.1.1.94"/>
    </reaction>
    <physiologicalReaction direction="right-to-left" evidence="1">
        <dbReference type="Rhea" id="RHEA:11098"/>
    </physiologicalReaction>
</comment>
<comment type="pathway">
    <text evidence="1">Membrane lipid metabolism; glycerophospholipid metabolism.</text>
</comment>
<comment type="subcellular location">
    <subcellularLocation>
        <location evidence="1">Cytoplasm</location>
    </subcellularLocation>
</comment>
<comment type="similarity">
    <text evidence="1">Belongs to the NAD-dependent glycerol-3-phosphate dehydrogenase family.</text>
</comment>
<feature type="chain" id="PRO_1000123195" description="Glycerol-3-phosphate dehydrogenase [NAD(P)+]">
    <location>
        <begin position="1"/>
        <end position="338"/>
    </location>
</feature>
<feature type="active site" description="Proton acceptor" evidence="1">
    <location>
        <position position="194"/>
    </location>
</feature>
<feature type="binding site" evidence="1">
    <location>
        <position position="13"/>
    </location>
    <ligand>
        <name>NADPH</name>
        <dbReference type="ChEBI" id="CHEBI:57783"/>
    </ligand>
</feature>
<feature type="binding site" evidence="1">
    <location>
        <position position="14"/>
    </location>
    <ligand>
        <name>NADPH</name>
        <dbReference type="ChEBI" id="CHEBI:57783"/>
    </ligand>
</feature>
<feature type="binding site" evidence="1">
    <location>
        <position position="108"/>
    </location>
    <ligand>
        <name>NADPH</name>
        <dbReference type="ChEBI" id="CHEBI:57783"/>
    </ligand>
</feature>
<feature type="binding site" evidence="1">
    <location>
        <position position="108"/>
    </location>
    <ligand>
        <name>sn-glycerol 3-phosphate</name>
        <dbReference type="ChEBI" id="CHEBI:57597"/>
    </ligand>
</feature>
<feature type="binding site" evidence="1">
    <location>
        <position position="139"/>
    </location>
    <ligand>
        <name>sn-glycerol 3-phosphate</name>
        <dbReference type="ChEBI" id="CHEBI:57597"/>
    </ligand>
</feature>
<feature type="binding site" evidence="1">
    <location>
        <position position="141"/>
    </location>
    <ligand>
        <name>sn-glycerol 3-phosphate</name>
        <dbReference type="ChEBI" id="CHEBI:57597"/>
    </ligand>
</feature>
<feature type="binding site" evidence="1">
    <location>
        <position position="143"/>
    </location>
    <ligand>
        <name>NADPH</name>
        <dbReference type="ChEBI" id="CHEBI:57783"/>
    </ligand>
</feature>
<feature type="binding site" evidence="1">
    <location>
        <position position="194"/>
    </location>
    <ligand>
        <name>sn-glycerol 3-phosphate</name>
        <dbReference type="ChEBI" id="CHEBI:57597"/>
    </ligand>
</feature>
<feature type="binding site" evidence="1">
    <location>
        <position position="247"/>
    </location>
    <ligand>
        <name>sn-glycerol 3-phosphate</name>
        <dbReference type="ChEBI" id="CHEBI:57597"/>
    </ligand>
</feature>
<feature type="binding site" evidence="1">
    <location>
        <position position="257"/>
    </location>
    <ligand>
        <name>sn-glycerol 3-phosphate</name>
        <dbReference type="ChEBI" id="CHEBI:57597"/>
    </ligand>
</feature>
<feature type="binding site" evidence="1">
    <location>
        <position position="258"/>
    </location>
    <ligand>
        <name>NADPH</name>
        <dbReference type="ChEBI" id="CHEBI:57783"/>
    </ligand>
</feature>
<feature type="binding site" evidence="1">
    <location>
        <position position="258"/>
    </location>
    <ligand>
        <name>sn-glycerol 3-phosphate</name>
        <dbReference type="ChEBI" id="CHEBI:57597"/>
    </ligand>
</feature>
<feature type="binding site" evidence="1">
    <location>
        <position position="259"/>
    </location>
    <ligand>
        <name>sn-glycerol 3-phosphate</name>
        <dbReference type="ChEBI" id="CHEBI:57597"/>
    </ligand>
</feature>
<feature type="binding site" evidence="1">
    <location>
        <position position="282"/>
    </location>
    <ligand>
        <name>NADPH</name>
        <dbReference type="ChEBI" id="CHEBI:57783"/>
    </ligand>
</feature>
<feature type="binding site" evidence="1">
    <location>
        <position position="284"/>
    </location>
    <ligand>
        <name>NADPH</name>
        <dbReference type="ChEBI" id="CHEBI:57783"/>
    </ligand>
</feature>
<gene>
    <name evidence="1" type="primary">gpsA</name>
    <name type="ordered locus">SPG_2029</name>
</gene>
<name>GPDA_STRP4</name>
<sequence>MEKQTVAVLGPGSWGTALSQVLNDNGHEVRIWGNLPEQINEINTHHTNKHYFKDVVLDENIIAYTDLAETLKDVDAILFVVPTKVTRLVAQQVAQTLDHKVIIMHASKGLEPDSHKRLSTILEEEIPEHLRSDIVVVSGPSHAXETIVRDLTLITAASKDLQTAQYVQELFSNHYFRLYTNTDVIGVETAGALKNIIAVGAGALHGLGFGDNAKAAIIARGLAEITRLGVALGANPLTYSGLSGVGDLIVTGTSIHSRNWRAGDALGRGESLADIEANMGMVIEGISTTRAAYELAQELGVYMPITQAIYQVIYHGTNIKDAIYDIMNNEFKAENEWS</sequence>
<proteinExistence type="inferred from homology"/>
<organism>
    <name type="scientific">Streptococcus pneumoniae serotype 19F (strain G54)</name>
    <dbReference type="NCBI Taxonomy" id="512566"/>
    <lineage>
        <taxon>Bacteria</taxon>
        <taxon>Bacillati</taxon>
        <taxon>Bacillota</taxon>
        <taxon>Bacilli</taxon>
        <taxon>Lactobacillales</taxon>
        <taxon>Streptococcaceae</taxon>
        <taxon>Streptococcus</taxon>
    </lineage>
</organism>
<protein>
    <recommendedName>
        <fullName evidence="1">Glycerol-3-phosphate dehydrogenase [NAD(P)+]</fullName>
        <ecNumber evidence="1">1.1.1.94</ecNumber>
    </recommendedName>
    <alternativeName>
        <fullName evidence="1">NAD(P)(+)-dependent glycerol-3-phosphate dehydrogenase</fullName>
    </alternativeName>
    <alternativeName>
        <fullName evidence="1">NAD(P)H-dependent dihydroxyacetone-phosphate reductase</fullName>
    </alternativeName>
</protein>
<dbReference type="EC" id="1.1.1.94" evidence="1"/>
<dbReference type="EMBL" id="CP001015">
    <property type="protein sequence ID" value="ACF56426.1"/>
    <property type="molecule type" value="Genomic_DNA"/>
</dbReference>
<dbReference type="KEGG" id="spx:SPG_2029"/>
<dbReference type="HOGENOM" id="CLU_033449_0_2_9"/>
<dbReference type="UniPathway" id="UPA00940"/>
<dbReference type="GO" id="GO:0005829">
    <property type="term" value="C:cytosol"/>
    <property type="evidence" value="ECO:0007669"/>
    <property type="project" value="TreeGrafter"/>
</dbReference>
<dbReference type="GO" id="GO:0047952">
    <property type="term" value="F:glycerol-3-phosphate dehydrogenase [NAD(P)+] activity"/>
    <property type="evidence" value="ECO:0007669"/>
    <property type="project" value="UniProtKB-UniRule"/>
</dbReference>
<dbReference type="GO" id="GO:0051287">
    <property type="term" value="F:NAD binding"/>
    <property type="evidence" value="ECO:0007669"/>
    <property type="project" value="InterPro"/>
</dbReference>
<dbReference type="GO" id="GO:0005975">
    <property type="term" value="P:carbohydrate metabolic process"/>
    <property type="evidence" value="ECO:0007669"/>
    <property type="project" value="InterPro"/>
</dbReference>
<dbReference type="GO" id="GO:0046167">
    <property type="term" value="P:glycerol-3-phosphate biosynthetic process"/>
    <property type="evidence" value="ECO:0007669"/>
    <property type="project" value="UniProtKB-UniRule"/>
</dbReference>
<dbReference type="GO" id="GO:0046168">
    <property type="term" value="P:glycerol-3-phosphate catabolic process"/>
    <property type="evidence" value="ECO:0007669"/>
    <property type="project" value="InterPro"/>
</dbReference>
<dbReference type="GO" id="GO:0006650">
    <property type="term" value="P:glycerophospholipid metabolic process"/>
    <property type="evidence" value="ECO:0007669"/>
    <property type="project" value="UniProtKB-UniRule"/>
</dbReference>
<dbReference type="GO" id="GO:0008654">
    <property type="term" value="P:phospholipid biosynthetic process"/>
    <property type="evidence" value="ECO:0007669"/>
    <property type="project" value="UniProtKB-KW"/>
</dbReference>
<dbReference type="FunFam" id="1.10.1040.10:FF:000001">
    <property type="entry name" value="Glycerol-3-phosphate dehydrogenase [NAD(P)+]"/>
    <property type="match status" value="1"/>
</dbReference>
<dbReference type="FunFam" id="3.40.50.720:FF:000019">
    <property type="entry name" value="Glycerol-3-phosphate dehydrogenase [NAD(P)+]"/>
    <property type="match status" value="1"/>
</dbReference>
<dbReference type="Gene3D" id="1.10.1040.10">
    <property type="entry name" value="N-(1-d-carboxylethyl)-l-norvaline Dehydrogenase, domain 2"/>
    <property type="match status" value="1"/>
</dbReference>
<dbReference type="Gene3D" id="3.40.50.720">
    <property type="entry name" value="NAD(P)-binding Rossmann-like Domain"/>
    <property type="match status" value="1"/>
</dbReference>
<dbReference type="HAMAP" id="MF_00394">
    <property type="entry name" value="NAD_Glyc3P_dehydrog"/>
    <property type="match status" value="1"/>
</dbReference>
<dbReference type="InterPro" id="IPR008927">
    <property type="entry name" value="6-PGluconate_DH-like_C_sf"/>
</dbReference>
<dbReference type="InterPro" id="IPR013328">
    <property type="entry name" value="6PGD_dom2"/>
</dbReference>
<dbReference type="InterPro" id="IPR006168">
    <property type="entry name" value="G3P_DH_NAD-dep"/>
</dbReference>
<dbReference type="InterPro" id="IPR006109">
    <property type="entry name" value="G3P_DH_NAD-dep_C"/>
</dbReference>
<dbReference type="InterPro" id="IPR011128">
    <property type="entry name" value="G3P_DH_NAD-dep_N"/>
</dbReference>
<dbReference type="InterPro" id="IPR036291">
    <property type="entry name" value="NAD(P)-bd_dom_sf"/>
</dbReference>
<dbReference type="NCBIfam" id="NF000940">
    <property type="entry name" value="PRK00094.1-2"/>
    <property type="match status" value="1"/>
</dbReference>
<dbReference type="NCBIfam" id="NF000941">
    <property type="entry name" value="PRK00094.1-3"/>
    <property type="match status" value="1"/>
</dbReference>
<dbReference type="NCBIfam" id="NF000942">
    <property type="entry name" value="PRK00094.1-4"/>
    <property type="match status" value="1"/>
</dbReference>
<dbReference type="PANTHER" id="PTHR11728">
    <property type="entry name" value="GLYCEROL-3-PHOSPHATE DEHYDROGENASE"/>
    <property type="match status" value="1"/>
</dbReference>
<dbReference type="PANTHER" id="PTHR11728:SF1">
    <property type="entry name" value="GLYCEROL-3-PHOSPHATE DEHYDROGENASE [NAD(+)] 2, CHLOROPLASTIC"/>
    <property type="match status" value="1"/>
</dbReference>
<dbReference type="Pfam" id="PF07479">
    <property type="entry name" value="NAD_Gly3P_dh_C"/>
    <property type="match status" value="1"/>
</dbReference>
<dbReference type="Pfam" id="PF01210">
    <property type="entry name" value="NAD_Gly3P_dh_N"/>
    <property type="match status" value="1"/>
</dbReference>
<dbReference type="PIRSF" id="PIRSF000114">
    <property type="entry name" value="Glycerol-3-P_dh"/>
    <property type="match status" value="1"/>
</dbReference>
<dbReference type="PRINTS" id="PR00077">
    <property type="entry name" value="GPDHDRGNASE"/>
</dbReference>
<dbReference type="SUPFAM" id="SSF48179">
    <property type="entry name" value="6-phosphogluconate dehydrogenase C-terminal domain-like"/>
    <property type="match status" value="1"/>
</dbReference>
<dbReference type="SUPFAM" id="SSF51735">
    <property type="entry name" value="NAD(P)-binding Rossmann-fold domains"/>
    <property type="match status" value="1"/>
</dbReference>
<dbReference type="PROSITE" id="PS00957">
    <property type="entry name" value="NAD_G3PDH"/>
    <property type="match status" value="1"/>
</dbReference>
<evidence type="ECO:0000255" key="1">
    <source>
        <dbReference type="HAMAP-Rule" id="MF_00394"/>
    </source>
</evidence>
<keyword id="KW-0963">Cytoplasm</keyword>
<keyword id="KW-0444">Lipid biosynthesis</keyword>
<keyword id="KW-0443">Lipid metabolism</keyword>
<keyword id="KW-0520">NAD</keyword>
<keyword id="KW-0521">NADP</keyword>
<keyword id="KW-0547">Nucleotide-binding</keyword>
<keyword id="KW-0560">Oxidoreductase</keyword>
<keyword id="KW-0594">Phospholipid biosynthesis</keyword>
<keyword id="KW-1208">Phospholipid metabolism</keyword>